<evidence type="ECO:0000255" key="1">
    <source>
        <dbReference type="HAMAP-Rule" id="MF_00182"/>
    </source>
</evidence>
<feature type="chain" id="PRO_1000098367" description="Methionyl-tRNA formyltransferase">
    <location>
        <begin position="1"/>
        <end position="320"/>
    </location>
</feature>
<feature type="binding site" evidence="1">
    <location>
        <begin position="114"/>
        <end position="117"/>
    </location>
    <ligand>
        <name>(6S)-5,6,7,8-tetrahydrofolate</name>
        <dbReference type="ChEBI" id="CHEBI:57453"/>
    </ligand>
</feature>
<comment type="function">
    <text evidence="1">Attaches a formyl group to the free amino group of methionyl-tRNA(fMet). The formyl group appears to play a dual role in the initiator identity of N-formylmethionyl-tRNA by promoting its recognition by IF2 and preventing the misappropriation of this tRNA by the elongation apparatus.</text>
</comment>
<comment type="catalytic activity">
    <reaction evidence="1">
        <text>L-methionyl-tRNA(fMet) + (6R)-10-formyltetrahydrofolate = N-formyl-L-methionyl-tRNA(fMet) + (6S)-5,6,7,8-tetrahydrofolate + H(+)</text>
        <dbReference type="Rhea" id="RHEA:24380"/>
        <dbReference type="Rhea" id="RHEA-COMP:9952"/>
        <dbReference type="Rhea" id="RHEA-COMP:9953"/>
        <dbReference type="ChEBI" id="CHEBI:15378"/>
        <dbReference type="ChEBI" id="CHEBI:57453"/>
        <dbReference type="ChEBI" id="CHEBI:78530"/>
        <dbReference type="ChEBI" id="CHEBI:78844"/>
        <dbReference type="ChEBI" id="CHEBI:195366"/>
        <dbReference type="EC" id="2.1.2.9"/>
    </reaction>
</comment>
<comment type="similarity">
    <text evidence="1">Belongs to the Fmt family.</text>
</comment>
<protein>
    <recommendedName>
        <fullName evidence="1">Methionyl-tRNA formyltransferase</fullName>
        <ecNumber evidence="1">2.1.2.9</ecNumber>
    </recommendedName>
</protein>
<gene>
    <name evidence="1" type="primary">fmt</name>
    <name type="ordered locus">ACICU_03655</name>
</gene>
<organism>
    <name type="scientific">Acinetobacter baumannii (strain ACICU)</name>
    <dbReference type="NCBI Taxonomy" id="405416"/>
    <lineage>
        <taxon>Bacteria</taxon>
        <taxon>Pseudomonadati</taxon>
        <taxon>Pseudomonadota</taxon>
        <taxon>Gammaproteobacteria</taxon>
        <taxon>Moraxellales</taxon>
        <taxon>Moraxellaceae</taxon>
        <taxon>Acinetobacter</taxon>
        <taxon>Acinetobacter calcoaceticus/baumannii complex</taxon>
    </lineage>
</organism>
<name>FMT_ACIBC</name>
<dbReference type="EC" id="2.1.2.9" evidence="1"/>
<dbReference type="EMBL" id="CP000863">
    <property type="protein sequence ID" value="ACC58964.1"/>
    <property type="molecule type" value="Genomic_DNA"/>
</dbReference>
<dbReference type="RefSeq" id="WP_000691198.1">
    <property type="nucleotide sequence ID" value="NZ_CP031380.1"/>
</dbReference>
<dbReference type="SMR" id="B2I2H7"/>
<dbReference type="KEGG" id="abc:ACICU_03655"/>
<dbReference type="HOGENOM" id="CLU_033347_1_2_6"/>
<dbReference type="Proteomes" id="UP000008839">
    <property type="component" value="Chromosome"/>
</dbReference>
<dbReference type="GO" id="GO:0005829">
    <property type="term" value="C:cytosol"/>
    <property type="evidence" value="ECO:0007669"/>
    <property type="project" value="TreeGrafter"/>
</dbReference>
<dbReference type="GO" id="GO:0004479">
    <property type="term" value="F:methionyl-tRNA formyltransferase activity"/>
    <property type="evidence" value="ECO:0007669"/>
    <property type="project" value="UniProtKB-UniRule"/>
</dbReference>
<dbReference type="CDD" id="cd08646">
    <property type="entry name" value="FMT_core_Met-tRNA-FMT_N"/>
    <property type="match status" value="1"/>
</dbReference>
<dbReference type="CDD" id="cd08704">
    <property type="entry name" value="Met_tRNA_FMT_C"/>
    <property type="match status" value="1"/>
</dbReference>
<dbReference type="Gene3D" id="3.10.25.10">
    <property type="entry name" value="Formyl transferase, C-terminal domain"/>
    <property type="match status" value="1"/>
</dbReference>
<dbReference type="Gene3D" id="3.40.50.170">
    <property type="entry name" value="Formyl transferase, N-terminal domain"/>
    <property type="match status" value="1"/>
</dbReference>
<dbReference type="HAMAP" id="MF_00182">
    <property type="entry name" value="Formyl_trans"/>
    <property type="match status" value="1"/>
</dbReference>
<dbReference type="InterPro" id="IPR005794">
    <property type="entry name" value="Fmt"/>
</dbReference>
<dbReference type="InterPro" id="IPR005793">
    <property type="entry name" value="Formyl_trans_C"/>
</dbReference>
<dbReference type="InterPro" id="IPR037022">
    <property type="entry name" value="Formyl_trans_C_sf"/>
</dbReference>
<dbReference type="InterPro" id="IPR002376">
    <property type="entry name" value="Formyl_transf_N"/>
</dbReference>
<dbReference type="InterPro" id="IPR036477">
    <property type="entry name" value="Formyl_transf_N_sf"/>
</dbReference>
<dbReference type="InterPro" id="IPR011034">
    <property type="entry name" value="Formyl_transferase-like_C_sf"/>
</dbReference>
<dbReference type="InterPro" id="IPR044135">
    <property type="entry name" value="Met-tRNA-FMT_C"/>
</dbReference>
<dbReference type="InterPro" id="IPR041711">
    <property type="entry name" value="Met-tRNA-FMT_N"/>
</dbReference>
<dbReference type="NCBIfam" id="TIGR00460">
    <property type="entry name" value="fmt"/>
    <property type="match status" value="1"/>
</dbReference>
<dbReference type="PANTHER" id="PTHR11138">
    <property type="entry name" value="METHIONYL-TRNA FORMYLTRANSFERASE"/>
    <property type="match status" value="1"/>
</dbReference>
<dbReference type="PANTHER" id="PTHR11138:SF5">
    <property type="entry name" value="METHIONYL-TRNA FORMYLTRANSFERASE, MITOCHONDRIAL"/>
    <property type="match status" value="1"/>
</dbReference>
<dbReference type="Pfam" id="PF02911">
    <property type="entry name" value="Formyl_trans_C"/>
    <property type="match status" value="1"/>
</dbReference>
<dbReference type="Pfam" id="PF00551">
    <property type="entry name" value="Formyl_trans_N"/>
    <property type="match status" value="1"/>
</dbReference>
<dbReference type="SUPFAM" id="SSF50486">
    <property type="entry name" value="FMT C-terminal domain-like"/>
    <property type="match status" value="1"/>
</dbReference>
<dbReference type="SUPFAM" id="SSF53328">
    <property type="entry name" value="Formyltransferase"/>
    <property type="match status" value="1"/>
</dbReference>
<proteinExistence type="inferred from homology"/>
<sequence>MKIIFAGTPEFAATALAALLKTSHEIIAVYTQPDRKAGRGQKLTPSPVKQLALEHNIPVYQPLHFKASTEEGLAAQQELAALGADVMVVAAYGLILPQAVLDTPKYGCLNIHGSLLPRWRGAAPIQRAIATGDDETGITIMQMAAGLDTGDMMYKTYCPITSEDTSATLHDKLAAQGATAICAVLESEETLQKYLAEREVQDESLTVYAHKLVKSEARIDWSMNAVQVDRNIRAFNPWPVAFIQLDENNALRVWNSTISNQNKADAQAGEIIAIDKQGVHVACGENTFICLTSVQWPGGKALNAQQIAQTQKLHVGQILP</sequence>
<accession>B2I2H7</accession>
<reference key="1">
    <citation type="journal article" date="2008" name="Antimicrob. Agents Chemother.">
        <title>Whole-genome pyrosequencing of an epidemic multidrug-resistant Acinetobacter baumannii strain belonging to the European clone II group.</title>
        <authorList>
            <person name="Iacono M."/>
            <person name="Villa L."/>
            <person name="Fortini D."/>
            <person name="Bordoni R."/>
            <person name="Imperi F."/>
            <person name="Bonnal R.J."/>
            <person name="Sicheritz-Ponten T."/>
            <person name="De Bellis G."/>
            <person name="Visca P."/>
            <person name="Cassone A."/>
            <person name="Carattoli A."/>
        </authorList>
    </citation>
    <scope>NUCLEOTIDE SEQUENCE [LARGE SCALE GENOMIC DNA]</scope>
    <source>
        <strain>ACICU</strain>
    </source>
</reference>
<keyword id="KW-0648">Protein biosynthesis</keyword>
<keyword id="KW-0808">Transferase</keyword>